<evidence type="ECO:0000255" key="1">
    <source>
        <dbReference type="PROSITE-ProRule" id="PRU01266"/>
    </source>
</evidence>
<evidence type="ECO:0000305" key="2"/>
<accession>O26217</accession>
<comment type="cofactor">
    <cofactor evidence="1">
        <name>[4Fe-4S] cluster</name>
        <dbReference type="ChEBI" id="CHEBI:49883"/>
    </cofactor>
</comment>
<comment type="similarity">
    <text evidence="2">Belongs to the radical SAM superfamily. Anaerobic sulfatase-maturating enzyme family.</text>
</comment>
<protein>
    <recommendedName>
        <fullName>Uncharacterized protein MTH_114</fullName>
    </recommendedName>
</protein>
<proteinExistence type="inferred from homology"/>
<dbReference type="EMBL" id="AE000666">
    <property type="protein sequence ID" value="AAB84620.1"/>
    <property type="molecule type" value="Genomic_DNA"/>
</dbReference>
<dbReference type="PIR" id="G69018">
    <property type="entry name" value="G69018"/>
</dbReference>
<dbReference type="RefSeq" id="WP_010875753.1">
    <property type="nucleotide sequence ID" value="NC_000916.1"/>
</dbReference>
<dbReference type="SMR" id="O26217"/>
<dbReference type="STRING" id="187420.MTH_114"/>
<dbReference type="PaxDb" id="187420-MTH_114"/>
<dbReference type="EnsemblBacteria" id="AAB84620">
    <property type="protein sequence ID" value="AAB84620"/>
    <property type="gene ID" value="MTH_114"/>
</dbReference>
<dbReference type="GeneID" id="1470075"/>
<dbReference type="KEGG" id="mth:MTH_114"/>
<dbReference type="PATRIC" id="fig|187420.15.peg.85"/>
<dbReference type="HOGENOM" id="CLU_009273_10_1_2"/>
<dbReference type="InParanoid" id="O26217"/>
<dbReference type="Proteomes" id="UP000005223">
    <property type="component" value="Chromosome"/>
</dbReference>
<dbReference type="GO" id="GO:0051539">
    <property type="term" value="F:4 iron, 4 sulfur cluster binding"/>
    <property type="evidence" value="ECO:0007669"/>
    <property type="project" value="UniProtKB-KW"/>
</dbReference>
<dbReference type="GO" id="GO:0046872">
    <property type="term" value="F:metal ion binding"/>
    <property type="evidence" value="ECO:0007669"/>
    <property type="project" value="UniProtKB-KW"/>
</dbReference>
<dbReference type="GO" id="GO:0016491">
    <property type="term" value="F:oxidoreductase activity"/>
    <property type="evidence" value="ECO:0007669"/>
    <property type="project" value="InterPro"/>
</dbReference>
<dbReference type="CDD" id="cd01335">
    <property type="entry name" value="Radical_SAM"/>
    <property type="match status" value="1"/>
</dbReference>
<dbReference type="Gene3D" id="3.20.20.70">
    <property type="entry name" value="Aldolase class I"/>
    <property type="match status" value="1"/>
</dbReference>
<dbReference type="InterPro" id="IPR013785">
    <property type="entry name" value="Aldolase_TIM"/>
</dbReference>
<dbReference type="InterPro" id="IPR024018">
    <property type="entry name" value="CHP04083_rSAM"/>
</dbReference>
<dbReference type="InterPro" id="IPR006638">
    <property type="entry name" value="Elp3/MiaA/NifB-like_rSAM"/>
</dbReference>
<dbReference type="InterPro" id="IPR007197">
    <property type="entry name" value="rSAM"/>
</dbReference>
<dbReference type="InterPro" id="IPR023867">
    <property type="entry name" value="Sulphatase_maturase_rSAM"/>
</dbReference>
<dbReference type="NCBIfam" id="TIGR04083">
    <property type="entry name" value="rSAM_pep_methan"/>
    <property type="match status" value="1"/>
</dbReference>
<dbReference type="PANTHER" id="PTHR43273">
    <property type="entry name" value="ANAEROBIC SULFATASE-MATURATING ENZYME HOMOLOG ASLB-RELATED"/>
    <property type="match status" value="1"/>
</dbReference>
<dbReference type="PANTHER" id="PTHR43273:SF3">
    <property type="entry name" value="ANAEROBIC SULFATASE-MATURATING ENZYME HOMOLOG ASLB-RELATED"/>
    <property type="match status" value="1"/>
</dbReference>
<dbReference type="Pfam" id="PF04055">
    <property type="entry name" value="Radical_SAM"/>
    <property type="match status" value="1"/>
</dbReference>
<dbReference type="SFLD" id="SFLDS00029">
    <property type="entry name" value="Radical_SAM"/>
    <property type="match status" value="1"/>
</dbReference>
<dbReference type="SFLD" id="SFLDG01067">
    <property type="entry name" value="SPASM/twitch_domain_containing"/>
    <property type="match status" value="1"/>
</dbReference>
<dbReference type="SMART" id="SM00729">
    <property type="entry name" value="Elp3"/>
    <property type="match status" value="1"/>
</dbReference>
<dbReference type="SUPFAM" id="SSF102114">
    <property type="entry name" value="Radical SAM enzymes"/>
    <property type="match status" value="1"/>
</dbReference>
<dbReference type="PROSITE" id="PS51918">
    <property type="entry name" value="RADICAL_SAM"/>
    <property type="match status" value="1"/>
</dbReference>
<keyword id="KW-0004">4Fe-4S</keyword>
<keyword id="KW-0408">Iron</keyword>
<keyword id="KW-0411">Iron-sulfur</keyword>
<keyword id="KW-0479">Metal-binding</keyword>
<keyword id="KW-1185">Reference proteome</keyword>
<keyword id="KW-0949">S-adenosyl-L-methionine</keyword>
<feature type="chain" id="PRO_0000134467" description="Uncharacterized protein MTH_114">
    <location>
        <begin position="1"/>
        <end position="262"/>
    </location>
</feature>
<feature type="domain" description="Radical SAM core" evidence="1">
    <location>
        <begin position="1"/>
        <end position="211"/>
    </location>
</feature>
<feature type="binding site" evidence="1">
    <location>
        <position position="13"/>
    </location>
    <ligand>
        <name>[4Fe-4S] cluster</name>
        <dbReference type="ChEBI" id="CHEBI:49883"/>
        <note>4Fe-4S-S-AdoMet</note>
    </ligand>
</feature>
<feature type="binding site" evidence="1">
    <location>
        <position position="17"/>
    </location>
    <ligand>
        <name>[4Fe-4S] cluster</name>
        <dbReference type="ChEBI" id="CHEBI:49883"/>
        <note>4Fe-4S-S-AdoMet</note>
    </ligand>
</feature>
<feature type="binding site" evidence="1">
    <location>
        <position position="20"/>
    </location>
    <ligand>
        <name>[4Fe-4S] cluster</name>
        <dbReference type="ChEBI" id="CHEBI:49883"/>
        <note>4Fe-4S-S-AdoMet</note>
    </ligand>
</feature>
<reference key="1">
    <citation type="journal article" date="1997" name="J. Bacteriol.">
        <title>Complete genome sequence of Methanobacterium thermoautotrophicum deltaH: functional analysis and comparative genomics.</title>
        <authorList>
            <person name="Smith D.R."/>
            <person name="Doucette-Stamm L.A."/>
            <person name="Deloughery C."/>
            <person name="Lee H.-M."/>
            <person name="Dubois J."/>
            <person name="Aldredge T."/>
            <person name="Bashirzadeh R."/>
            <person name="Blakely D."/>
            <person name="Cook R."/>
            <person name="Gilbert K."/>
            <person name="Harrison D."/>
            <person name="Hoang L."/>
            <person name="Keagle P."/>
            <person name="Lumm W."/>
            <person name="Pothier B."/>
            <person name="Qiu D."/>
            <person name="Spadafora R."/>
            <person name="Vicare R."/>
            <person name="Wang Y."/>
            <person name="Wierzbowski J."/>
            <person name="Gibson R."/>
            <person name="Jiwani N."/>
            <person name="Caruso A."/>
            <person name="Bush D."/>
            <person name="Safer H."/>
            <person name="Patwell D."/>
            <person name="Prabhakar S."/>
            <person name="McDougall S."/>
            <person name="Shimer G."/>
            <person name="Goyal A."/>
            <person name="Pietrovski S."/>
            <person name="Church G.M."/>
            <person name="Daniels C.J."/>
            <person name="Mao J.-I."/>
            <person name="Rice P."/>
            <person name="Noelling J."/>
            <person name="Reeve J.N."/>
        </authorList>
    </citation>
    <scope>NUCLEOTIDE SEQUENCE [LARGE SCALE GENOMIC DNA]</scope>
    <source>
        <strain>ATCC 29096 / DSM 1053 / JCM 10044 / NBRC 100330 / Delta H</strain>
    </source>
</reference>
<gene>
    <name type="ordered locus">MTH_114</name>
</gene>
<sequence>MAFHVMIIPSMNCPSDCSYCWGVDRDSRVMDMETVREMVSWLMEFRNEPATFTFHGGEPLLAGYEFYRDTLKLISERLSFLKPAFAIQTNLWLMTDEMAELFAEYSIPIGSSLDGPREINDYQRGDGYFDRTMQGYEIARKHGLRVSFISTFTSYSIRRREEIFNFFLENGMNLKLHPALPSLKSSDPEEWAITAEEYGDLLLYLLDSYLEHFGEIEIQNIDHFAKSAFLRRGLYVHMLIVWATPSQLTPTVIYTHAIASLV</sequence>
<name>Y114_METTH</name>
<organism>
    <name type="scientific">Methanothermobacter thermautotrophicus (strain ATCC 29096 / DSM 1053 / JCM 10044 / NBRC 100330 / Delta H)</name>
    <name type="common">Methanobacterium thermoautotrophicum</name>
    <dbReference type="NCBI Taxonomy" id="187420"/>
    <lineage>
        <taxon>Archaea</taxon>
        <taxon>Methanobacteriati</taxon>
        <taxon>Methanobacteriota</taxon>
        <taxon>Methanomada group</taxon>
        <taxon>Methanobacteria</taxon>
        <taxon>Methanobacteriales</taxon>
        <taxon>Methanobacteriaceae</taxon>
        <taxon>Methanothermobacter</taxon>
    </lineage>
</organism>